<accession>O24704</accession>
<gene>
    <name evidence="1" type="primary">rplR</name>
    <name evidence="1" type="synonym">rpl18</name>
    <name type="ordered locus">syc1880_d</name>
</gene>
<keyword id="KW-0687">Ribonucleoprotein</keyword>
<keyword id="KW-0689">Ribosomal protein</keyword>
<keyword id="KW-0694">RNA-binding</keyword>
<keyword id="KW-0699">rRNA-binding</keyword>
<reference key="1">
    <citation type="journal article" date="1997" name="Gene">
        <title>Organization of a large gene cluster encoding ribosomal proteins in the cyanobacterium Synechococcus sp. strain PCC 6301: comparison of gene clusters among cyanobacteria, eubacteria and chloroplast genomes.</title>
        <authorList>
            <person name="Sugita M."/>
            <person name="Sugishita H."/>
            <person name="Fujishiro T."/>
            <person name="Tsuboi M."/>
            <person name="Sugita C."/>
            <person name="Endo T."/>
            <person name="Sugiura M."/>
        </authorList>
    </citation>
    <scope>NUCLEOTIDE SEQUENCE [GENOMIC DNA]</scope>
</reference>
<reference key="2">
    <citation type="journal article" date="2007" name="Photosyn. Res.">
        <title>Complete nucleotide sequence of the freshwater unicellular cyanobacterium Synechococcus elongatus PCC 6301 chromosome: gene content and organization.</title>
        <authorList>
            <person name="Sugita C."/>
            <person name="Ogata K."/>
            <person name="Shikata M."/>
            <person name="Jikuya H."/>
            <person name="Takano J."/>
            <person name="Furumichi M."/>
            <person name="Kanehisa M."/>
            <person name="Omata T."/>
            <person name="Sugiura M."/>
            <person name="Sugita M."/>
        </authorList>
    </citation>
    <scope>NUCLEOTIDE SEQUENCE [LARGE SCALE GENOMIC DNA]</scope>
    <source>
        <strain>ATCC 27144 / PCC 6301 / SAUG 1402/1</strain>
    </source>
</reference>
<protein>
    <recommendedName>
        <fullName evidence="1">Large ribosomal subunit protein uL18</fullName>
    </recommendedName>
    <alternativeName>
        <fullName evidence="2">50S ribosomal protein L18</fullName>
    </alternativeName>
</protein>
<dbReference type="EMBL" id="AB000111">
    <property type="protein sequence ID" value="BAA22464.1"/>
    <property type="molecule type" value="Genomic_DNA"/>
</dbReference>
<dbReference type="EMBL" id="AP008231">
    <property type="protein sequence ID" value="BAD80070.1"/>
    <property type="molecule type" value="Genomic_DNA"/>
</dbReference>
<dbReference type="RefSeq" id="WP_011244190.1">
    <property type="nucleotide sequence ID" value="NZ_CP085785.1"/>
</dbReference>
<dbReference type="SMR" id="O24704"/>
<dbReference type="GeneID" id="72431100"/>
<dbReference type="KEGG" id="syc:syc1880_d"/>
<dbReference type="eggNOG" id="COG0256">
    <property type="taxonomic scope" value="Bacteria"/>
</dbReference>
<dbReference type="Proteomes" id="UP000001175">
    <property type="component" value="Chromosome"/>
</dbReference>
<dbReference type="GO" id="GO:0022625">
    <property type="term" value="C:cytosolic large ribosomal subunit"/>
    <property type="evidence" value="ECO:0007669"/>
    <property type="project" value="TreeGrafter"/>
</dbReference>
<dbReference type="GO" id="GO:0008097">
    <property type="term" value="F:5S rRNA binding"/>
    <property type="evidence" value="ECO:0007669"/>
    <property type="project" value="TreeGrafter"/>
</dbReference>
<dbReference type="GO" id="GO:0003735">
    <property type="term" value="F:structural constituent of ribosome"/>
    <property type="evidence" value="ECO:0007669"/>
    <property type="project" value="InterPro"/>
</dbReference>
<dbReference type="GO" id="GO:0006412">
    <property type="term" value="P:translation"/>
    <property type="evidence" value="ECO:0007669"/>
    <property type="project" value="UniProtKB-UniRule"/>
</dbReference>
<dbReference type="CDD" id="cd00432">
    <property type="entry name" value="Ribosomal_L18_L5e"/>
    <property type="match status" value="1"/>
</dbReference>
<dbReference type="FunFam" id="3.30.420.100:FF:000001">
    <property type="entry name" value="50S ribosomal protein L18"/>
    <property type="match status" value="1"/>
</dbReference>
<dbReference type="Gene3D" id="3.30.420.100">
    <property type="match status" value="1"/>
</dbReference>
<dbReference type="HAMAP" id="MF_01337_B">
    <property type="entry name" value="Ribosomal_uL18_B"/>
    <property type="match status" value="1"/>
</dbReference>
<dbReference type="InterPro" id="IPR004389">
    <property type="entry name" value="Ribosomal_uL18_bac-type"/>
</dbReference>
<dbReference type="InterPro" id="IPR005484">
    <property type="entry name" value="Ribosomal_uL18_bac/euk"/>
</dbReference>
<dbReference type="NCBIfam" id="TIGR00060">
    <property type="entry name" value="L18_bact"/>
    <property type="match status" value="1"/>
</dbReference>
<dbReference type="PANTHER" id="PTHR12899">
    <property type="entry name" value="39S RIBOSOMAL PROTEIN L18, MITOCHONDRIAL"/>
    <property type="match status" value="1"/>
</dbReference>
<dbReference type="PANTHER" id="PTHR12899:SF3">
    <property type="entry name" value="LARGE RIBOSOMAL SUBUNIT PROTEIN UL18M"/>
    <property type="match status" value="1"/>
</dbReference>
<dbReference type="Pfam" id="PF00861">
    <property type="entry name" value="Ribosomal_L18p"/>
    <property type="match status" value="1"/>
</dbReference>
<dbReference type="SUPFAM" id="SSF53137">
    <property type="entry name" value="Translational machinery components"/>
    <property type="match status" value="1"/>
</dbReference>
<evidence type="ECO:0000255" key="1">
    <source>
        <dbReference type="HAMAP-Rule" id="MF_01337"/>
    </source>
</evidence>
<evidence type="ECO:0000305" key="2"/>
<organism>
    <name type="scientific">Synechococcus sp. (strain ATCC 27144 / PCC 6301 / SAUG 1402/1)</name>
    <name type="common">Anacystis nidulans</name>
    <dbReference type="NCBI Taxonomy" id="269084"/>
    <lineage>
        <taxon>Bacteria</taxon>
        <taxon>Bacillati</taxon>
        <taxon>Cyanobacteriota</taxon>
        <taxon>Cyanophyceae</taxon>
        <taxon>Synechococcales</taxon>
        <taxon>Synechococcaceae</taxon>
        <taxon>Synechococcus</taxon>
    </lineage>
</organism>
<proteinExistence type="inferred from homology"/>
<name>RL18_SYNP6</name>
<sequence>MKVSRRESTRRRHRRVRRTIVGTPARPRLSVFRSNNHIYAQVIDDAAGHTLAAASSLDPDLRQSLTSGGNQQASAAVGKLIAERAQAKGVTTVVFDRGGNLYHGRVKALAEAAREAGLEF</sequence>
<comment type="function">
    <text evidence="1">This is one of the proteins that bind and probably mediate the attachment of the 5S RNA into the large ribosomal subunit, where it forms part of the central protuberance.</text>
</comment>
<comment type="subunit">
    <text evidence="1">Part of the 50S ribosomal subunit; part of the 5S rRNA/L5/L18/L25 subcomplex. Contacts the 5S and 23S rRNAs.</text>
</comment>
<comment type="similarity">
    <text evidence="1">Belongs to the universal ribosomal protein uL18 family.</text>
</comment>
<feature type="chain" id="PRO_0000131367" description="Large ribosomal subunit protein uL18">
    <location>
        <begin position="1"/>
        <end position="120"/>
    </location>
</feature>